<accession>B8I815</accession>
<proteinExistence type="inferred from homology"/>
<comment type="function">
    <text evidence="1">This protein is one of the early assembly proteins of the 50S ribosomal subunit, although it is not seen to bind rRNA by itself. It is important during the early stages of 50S assembly.</text>
</comment>
<comment type="subunit">
    <text evidence="1">Part of the 50S ribosomal subunit.</text>
</comment>
<comment type="similarity">
    <text evidence="1">Belongs to the universal ribosomal protein uL13 family.</text>
</comment>
<name>RL13_RUMCH</name>
<keyword id="KW-1185">Reference proteome</keyword>
<keyword id="KW-0687">Ribonucleoprotein</keyword>
<keyword id="KW-0689">Ribosomal protein</keyword>
<protein>
    <recommendedName>
        <fullName evidence="1">Large ribosomal subunit protein uL13</fullName>
    </recommendedName>
    <alternativeName>
        <fullName evidence="2">50S ribosomal protein L13</fullName>
    </alternativeName>
</protein>
<gene>
    <name evidence="1" type="primary">rplM</name>
    <name type="ordered locus">Ccel_0794</name>
</gene>
<organism>
    <name type="scientific">Ruminiclostridium cellulolyticum (strain ATCC 35319 / DSM 5812 / JCM 6584 / H10)</name>
    <name type="common">Clostridium cellulolyticum</name>
    <dbReference type="NCBI Taxonomy" id="394503"/>
    <lineage>
        <taxon>Bacteria</taxon>
        <taxon>Bacillati</taxon>
        <taxon>Bacillota</taxon>
        <taxon>Clostridia</taxon>
        <taxon>Eubacteriales</taxon>
        <taxon>Oscillospiraceae</taxon>
        <taxon>Ruminiclostridium</taxon>
    </lineage>
</organism>
<sequence length="144" mass="16600">MKTFMAKPQEVERKWYIIDAEGKPLGRLASEVASIIRGKNKPIFTPHVDTGDHVIVLNAEKVLLTGKKLDQKLHRYHTLHPGGLKEIKYRHLMEKHPERAIELAVKGMLPKNSLGRQMYRKLKVYRGAEHNHQAQKPEVLDLNI</sequence>
<evidence type="ECO:0000255" key="1">
    <source>
        <dbReference type="HAMAP-Rule" id="MF_01366"/>
    </source>
</evidence>
<evidence type="ECO:0000305" key="2"/>
<dbReference type="EMBL" id="CP001348">
    <property type="protein sequence ID" value="ACL75172.1"/>
    <property type="molecule type" value="Genomic_DNA"/>
</dbReference>
<dbReference type="RefSeq" id="WP_015924334.1">
    <property type="nucleotide sequence ID" value="NC_011898.1"/>
</dbReference>
<dbReference type="SMR" id="B8I815"/>
<dbReference type="STRING" id="394503.Ccel_0794"/>
<dbReference type="KEGG" id="cce:Ccel_0794"/>
<dbReference type="eggNOG" id="COG0102">
    <property type="taxonomic scope" value="Bacteria"/>
</dbReference>
<dbReference type="HOGENOM" id="CLU_082184_2_2_9"/>
<dbReference type="OrthoDB" id="9801330at2"/>
<dbReference type="Proteomes" id="UP000001349">
    <property type="component" value="Chromosome"/>
</dbReference>
<dbReference type="GO" id="GO:0022625">
    <property type="term" value="C:cytosolic large ribosomal subunit"/>
    <property type="evidence" value="ECO:0007669"/>
    <property type="project" value="TreeGrafter"/>
</dbReference>
<dbReference type="GO" id="GO:0003729">
    <property type="term" value="F:mRNA binding"/>
    <property type="evidence" value="ECO:0007669"/>
    <property type="project" value="TreeGrafter"/>
</dbReference>
<dbReference type="GO" id="GO:0003735">
    <property type="term" value="F:structural constituent of ribosome"/>
    <property type="evidence" value="ECO:0007669"/>
    <property type="project" value="InterPro"/>
</dbReference>
<dbReference type="GO" id="GO:0017148">
    <property type="term" value="P:negative regulation of translation"/>
    <property type="evidence" value="ECO:0007669"/>
    <property type="project" value="TreeGrafter"/>
</dbReference>
<dbReference type="GO" id="GO:0006412">
    <property type="term" value="P:translation"/>
    <property type="evidence" value="ECO:0007669"/>
    <property type="project" value="UniProtKB-UniRule"/>
</dbReference>
<dbReference type="CDD" id="cd00392">
    <property type="entry name" value="Ribosomal_L13"/>
    <property type="match status" value="1"/>
</dbReference>
<dbReference type="FunFam" id="3.90.1180.10:FF:000001">
    <property type="entry name" value="50S ribosomal protein L13"/>
    <property type="match status" value="1"/>
</dbReference>
<dbReference type="Gene3D" id="3.90.1180.10">
    <property type="entry name" value="Ribosomal protein L13"/>
    <property type="match status" value="1"/>
</dbReference>
<dbReference type="HAMAP" id="MF_01366">
    <property type="entry name" value="Ribosomal_uL13"/>
    <property type="match status" value="1"/>
</dbReference>
<dbReference type="InterPro" id="IPR005822">
    <property type="entry name" value="Ribosomal_uL13"/>
</dbReference>
<dbReference type="InterPro" id="IPR005823">
    <property type="entry name" value="Ribosomal_uL13_bac-type"/>
</dbReference>
<dbReference type="InterPro" id="IPR023563">
    <property type="entry name" value="Ribosomal_uL13_CS"/>
</dbReference>
<dbReference type="InterPro" id="IPR036899">
    <property type="entry name" value="Ribosomal_uL13_sf"/>
</dbReference>
<dbReference type="NCBIfam" id="TIGR01066">
    <property type="entry name" value="rplM_bact"/>
    <property type="match status" value="1"/>
</dbReference>
<dbReference type="PANTHER" id="PTHR11545:SF2">
    <property type="entry name" value="LARGE RIBOSOMAL SUBUNIT PROTEIN UL13M"/>
    <property type="match status" value="1"/>
</dbReference>
<dbReference type="PANTHER" id="PTHR11545">
    <property type="entry name" value="RIBOSOMAL PROTEIN L13"/>
    <property type="match status" value="1"/>
</dbReference>
<dbReference type="Pfam" id="PF00572">
    <property type="entry name" value="Ribosomal_L13"/>
    <property type="match status" value="1"/>
</dbReference>
<dbReference type="PIRSF" id="PIRSF002181">
    <property type="entry name" value="Ribosomal_L13"/>
    <property type="match status" value="1"/>
</dbReference>
<dbReference type="SUPFAM" id="SSF52161">
    <property type="entry name" value="Ribosomal protein L13"/>
    <property type="match status" value="1"/>
</dbReference>
<dbReference type="PROSITE" id="PS00783">
    <property type="entry name" value="RIBOSOMAL_L13"/>
    <property type="match status" value="1"/>
</dbReference>
<feature type="chain" id="PRO_1000166860" description="Large ribosomal subunit protein uL13">
    <location>
        <begin position="1"/>
        <end position="144"/>
    </location>
</feature>
<reference key="1">
    <citation type="submission" date="2009-01" db="EMBL/GenBank/DDBJ databases">
        <title>Complete sequence of Clostridium cellulolyticum H10.</title>
        <authorList>
            <consortium name="US DOE Joint Genome Institute"/>
            <person name="Lucas S."/>
            <person name="Copeland A."/>
            <person name="Lapidus A."/>
            <person name="Glavina del Rio T."/>
            <person name="Dalin E."/>
            <person name="Tice H."/>
            <person name="Bruce D."/>
            <person name="Goodwin L."/>
            <person name="Pitluck S."/>
            <person name="Chertkov O."/>
            <person name="Saunders E."/>
            <person name="Brettin T."/>
            <person name="Detter J.C."/>
            <person name="Han C."/>
            <person name="Larimer F."/>
            <person name="Land M."/>
            <person name="Hauser L."/>
            <person name="Kyrpides N."/>
            <person name="Ivanova N."/>
            <person name="Zhou J."/>
            <person name="Richardson P."/>
        </authorList>
    </citation>
    <scope>NUCLEOTIDE SEQUENCE [LARGE SCALE GENOMIC DNA]</scope>
    <source>
        <strain>ATCC 35319 / DSM 5812 / JCM 6584 / H10</strain>
    </source>
</reference>